<organism>
    <name type="scientific">Saccharomyces cerevisiae (strain YJM789)</name>
    <name type="common">Baker's yeast</name>
    <dbReference type="NCBI Taxonomy" id="307796"/>
    <lineage>
        <taxon>Eukaryota</taxon>
        <taxon>Fungi</taxon>
        <taxon>Dikarya</taxon>
        <taxon>Ascomycota</taxon>
        <taxon>Saccharomycotina</taxon>
        <taxon>Saccharomycetes</taxon>
        <taxon>Saccharomycetales</taxon>
        <taxon>Saccharomycetaceae</taxon>
        <taxon>Saccharomyces</taxon>
    </lineage>
</organism>
<comment type="induction">
    <text evidence="1">Induced by pheromone. Down-regulated by RIM101 and inositol (By similarity).</text>
</comment>
<comment type="sequence caution" evidence="3">
    <conflict type="erroneous initiation">
        <sequence resource="EMBL-CDS" id="EDN60315"/>
    </conflict>
</comment>
<sequence>MYRTRSSDEVATLTDPTSSSDVATSADPTSSSAVTTLVDPTTSVVISTSVDQTSSSDVATSVDPTTSVISSTSADPTTSADSTTSTVQTTSVDPTSSVVSSSSADLSSSVISSSSADPTTSTVQTTSVDPTSSVVSSSSADLSSSVISSSSADPTTSTVQTTSVDPTSSVVSSAPVDPASSVVSLTSSYPTSSSTVTISANSNGSATLTAQTTSIDPVSSIVSSSGATTIISSASIDPASSVVSSTSSEPTSFIVSSTSVYSTRPSGPTTSTDLATFSDTIILRVSTTSTSQDTQTVSSSLTDMVSSTGSADLSVSSIQRSQVDPSTFAVSNSPVYPTASTGSTSTGIPIASESLSLSRQQGISATSSSSIVTLTPVDSASSSRSSATSIIKPNMPVSSNDSKTQSSVSVVDTFQSTKSSYPSITSADPTTLASENGLVGSSSSAHPITLDRTYASAHASVTDIVSRVTDSTRHTTLVTSNINIQSEVGNLNYSGPKDTTITKQSAFMTSPASTSTISNVQSTASVMNHSIEDNISATASLESVSGTSTKDYSSQSSAIHYTNSFTTTTTNAFITSKHSIAAVSTGAITSSASISLIMEGSANIEAVGKLVWLAAALPLAFI</sequence>
<accession>A6ZXT5</accession>
<gene>
    <name type="primary">PRM7</name>
    <name type="ORF">SCY_0873</name>
</gene>
<evidence type="ECO:0000250" key="1"/>
<evidence type="ECO:0000256" key="2">
    <source>
        <dbReference type="SAM" id="MobiDB-lite"/>
    </source>
</evidence>
<evidence type="ECO:0000305" key="3"/>
<name>PRM7_YEAS7</name>
<dbReference type="EMBL" id="AAFW02000145">
    <property type="protein sequence ID" value="EDN60315.1"/>
    <property type="status" value="ALT_INIT"/>
    <property type="molecule type" value="Genomic_DNA"/>
</dbReference>
<dbReference type="HOGENOM" id="CLU_2110826_0_0_1"/>
<dbReference type="OrthoDB" id="40862at4893"/>
<dbReference type="Proteomes" id="UP000007060">
    <property type="component" value="Unassembled WGS sequence"/>
</dbReference>
<protein>
    <recommendedName>
        <fullName>Pheromone-regulated protein PRM7</fullName>
    </recommendedName>
</protein>
<feature type="chain" id="PRO_0000345085" description="Pheromone-regulated protein PRM7">
    <location>
        <begin position="1"/>
        <end position="622"/>
    </location>
</feature>
<feature type="region of interest" description="Disordered" evidence="2">
    <location>
        <begin position="1"/>
        <end position="35"/>
    </location>
</feature>
<feature type="region of interest" description="Disordered" evidence="2">
    <location>
        <begin position="47"/>
        <end position="200"/>
    </location>
</feature>
<feature type="region of interest" description="Disordered" evidence="2">
    <location>
        <begin position="374"/>
        <end position="405"/>
    </location>
</feature>
<feature type="compositionally biased region" description="Polar residues" evidence="2">
    <location>
        <begin position="14"/>
        <end position="35"/>
    </location>
</feature>
<feature type="compositionally biased region" description="Low complexity" evidence="2">
    <location>
        <begin position="47"/>
        <end position="199"/>
    </location>
</feature>
<feature type="compositionally biased region" description="Low complexity" evidence="2">
    <location>
        <begin position="379"/>
        <end position="389"/>
    </location>
</feature>
<feature type="compositionally biased region" description="Polar residues" evidence="2">
    <location>
        <begin position="396"/>
        <end position="405"/>
    </location>
</feature>
<reference key="1">
    <citation type="journal article" date="2007" name="Proc. Natl. Acad. Sci. U.S.A.">
        <title>Genome sequencing and comparative analysis of Saccharomyces cerevisiae strain YJM789.</title>
        <authorList>
            <person name="Wei W."/>
            <person name="McCusker J.H."/>
            <person name="Hyman R.W."/>
            <person name="Jones T."/>
            <person name="Ning Y."/>
            <person name="Cao Z."/>
            <person name="Gu Z."/>
            <person name="Bruno D."/>
            <person name="Miranda M."/>
            <person name="Nguyen M."/>
            <person name="Wilhelmy J."/>
            <person name="Komp C."/>
            <person name="Tamse R."/>
            <person name="Wang X."/>
            <person name="Jia P."/>
            <person name="Luedi P."/>
            <person name="Oefner P.J."/>
            <person name="David L."/>
            <person name="Dietrich F.S."/>
            <person name="Li Y."/>
            <person name="Davis R.W."/>
            <person name="Steinmetz L.M."/>
        </authorList>
    </citation>
    <scope>NUCLEOTIDE SEQUENCE [LARGE SCALE GENOMIC DNA]</scope>
    <source>
        <strain>YJM789</strain>
    </source>
</reference>
<proteinExistence type="inferred from homology"/>